<proteinExistence type="inferred from homology"/>
<keyword id="KW-0067">ATP-binding</keyword>
<keyword id="KW-0238">DNA-binding</keyword>
<keyword id="KW-0479">Metal-binding</keyword>
<keyword id="KW-0547">Nucleotide-binding</keyword>
<keyword id="KW-0678">Repressor</keyword>
<keyword id="KW-0804">Transcription</keyword>
<keyword id="KW-0805">Transcription regulation</keyword>
<keyword id="KW-0862">Zinc</keyword>
<keyword id="KW-0863">Zinc-finger</keyword>
<name>NRDR_THET2</name>
<accession>Q72GI8</accession>
<organism>
    <name type="scientific">Thermus thermophilus (strain ATCC BAA-163 / DSM 7039 / HB27)</name>
    <dbReference type="NCBI Taxonomy" id="262724"/>
    <lineage>
        <taxon>Bacteria</taxon>
        <taxon>Thermotogati</taxon>
        <taxon>Deinococcota</taxon>
        <taxon>Deinococci</taxon>
        <taxon>Thermales</taxon>
        <taxon>Thermaceae</taxon>
        <taxon>Thermus</taxon>
    </lineage>
</organism>
<evidence type="ECO:0000255" key="1">
    <source>
        <dbReference type="HAMAP-Rule" id="MF_00440"/>
    </source>
</evidence>
<reference key="1">
    <citation type="journal article" date="2004" name="Nat. Biotechnol.">
        <title>The genome sequence of the extreme thermophile Thermus thermophilus.</title>
        <authorList>
            <person name="Henne A."/>
            <person name="Brueggemann H."/>
            <person name="Raasch C."/>
            <person name="Wiezer A."/>
            <person name="Hartsch T."/>
            <person name="Liesegang H."/>
            <person name="Johann A."/>
            <person name="Lienard T."/>
            <person name="Gohl O."/>
            <person name="Martinez-Arias R."/>
            <person name="Jacobi C."/>
            <person name="Starkuviene V."/>
            <person name="Schlenczeck S."/>
            <person name="Dencker S."/>
            <person name="Huber R."/>
            <person name="Klenk H.-P."/>
            <person name="Kramer W."/>
            <person name="Merkl R."/>
            <person name="Gottschalk G."/>
            <person name="Fritz H.-J."/>
        </authorList>
    </citation>
    <scope>NUCLEOTIDE SEQUENCE [LARGE SCALE GENOMIC DNA]</scope>
    <source>
        <strain>ATCC BAA-163 / DSM 7039 / HB27</strain>
    </source>
</reference>
<protein>
    <recommendedName>
        <fullName evidence="1">Transcriptional repressor NrdR</fullName>
    </recommendedName>
</protein>
<feature type="chain" id="PRO_0000182373" description="Transcriptional repressor NrdR">
    <location>
        <begin position="1"/>
        <end position="153"/>
    </location>
</feature>
<feature type="domain" description="ATP-cone" evidence="1">
    <location>
        <begin position="49"/>
        <end position="136"/>
    </location>
</feature>
<feature type="zinc finger region" evidence="1">
    <location>
        <begin position="3"/>
        <end position="34"/>
    </location>
</feature>
<sequence length="153" mass="17792">MKCPYCGHPDTRVVDSRPSDEGMAIRRRRECPSCGRRFTTYERTQLEPLMVVKRDGRKEPFNPDKLLRGLLLACEKRPVSEEVLRRFAYTFEDQVSGPEITSEEIGLKALAFLKELDHVAYIRFASVYREFDSVERFIEEIRSLASLDKKEGD</sequence>
<gene>
    <name evidence="1" type="primary">nrdR</name>
    <name type="ordered locus">TT_C1860</name>
</gene>
<comment type="function">
    <text evidence="1">Negatively regulates transcription of bacterial ribonucleotide reductase nrd genes and operons by binding to NrdR-boxes.</text>
</comment>
<comment type="cofactor">
    <cofactor evidence="1">
        <name>Zn(2+)</name>
        <dbReference type="ChEBI" id="CHEBI:29105"/>
    </cofactor>
    <text evidence="1">Binds 1 zinc ion.</text>
</comment>
<comment type="similarity">
    <text evidence="1">Belongs to the NrdR family.</text>
</comment>
<dbReference type="EMBL" id="AE017221">
    <property type="protein sequence ID" value="AAS82202.1"/>
    <property type="molecule type" value="Genomic_DNA"/>
</dbReference>
<dbReference type="RefSeq" id="WP_011174215.1">
    <property type="nucleotide sequence ID" value="NC_005835.1"/>
</dbReference>
<dbReference type="SMR" id="Q72GI8"/>
<dbReference type="GeneID" id="3168689"/>
<dbReference type="KEGG" id="tth:TT_C1860"/>
<dbReference type="eggNOG" id="COG1327">
    <property type="taxonomic scope" value="Bacteria"/>
</dbReference>
<dbReference type="HOGENOM" id="CLU_108412_1_0_0"/>
<dbReference type="OrthoDB" id="9807461at2"/>
<dbReference type="Proteomes" id="UP000000592">
    <property type="component" value="Chromosome"/>
</dbReference>
<dbReference type="GO" id="GO:0005524">
    <property type="term" value="F:ATP binding"/>
    <property type="evidence" value="ECO:0007669"/>
    <property type="project" value="UniProtKB-KW"/>
</dbReference>
<dbReference type="GO" id="GO:0003677">
    <property type="term" value="F:DNA binding"/>
    <property type="evidence" value="ECO:0007669"/>
    <property type="project" value="UniProtKB-KW"/>
</dbReference>
<dbReference type="GO" id="GO:0008270">
    <property type="term" value="F:zinc ion binding"/>
    <property type="evidence" value="ECO:0007669"/>
    <property type="project" value="UniProtKB-UniRule"/>
</dbReference>
<dbReference type="GO" id="GO:0045892">
    <property type="term" value="P:negative regulation of DNA-templated transcription"/>
    <property type="evidence" value="ECO:0007669"/>
    <property type="project" value="UniProtKB-UniRule"/>
</dbReference>
<dbReference type="HAMAP" id="MF_00440">
    <property type="entry name" value="NrdR"/>
    <property type="match status" value="1"/>
</dbReference>
<dbReference type="InterPro" id="IPR005144">
    <property type="entry name" value="ATP-cone_dom"/>
</dbReference>
<dbReference type="InterPro" id="IPR055173">
    <property type="entry name" value="NrdR-like_N"/>
</dbReference>
<dbReference type="InterPro" id="IPR003796">
    <property type="entry name" value="RNR_NrdR-like"/>
</dbReference>
<dbReference type="NCBIfam" id="TIGR00244">
    <property type="entry name" value="transcriptional regulator NrdR"/>
    <property type="match status" value="1"/>
</dbReference>
<dbReference type="PANTHER" id="PTHR30455">
    <property type="entry name" value="TRANSCRIPTIONAL REPRESSOR NRDR"/>
    <property type="match status" value="1"/>
</dbReference>
<dbReference type="PANTHER" id="PTHR30455:SF2">
    <property type="entry name" value="TRANSCRIPTIONAL REPRESSOR NRDR"/>
    <property type="match status" value="1"/>
</dbReference>
<dbReference type="Pfam" id="PF03477">
    <property type="entry name" value="ATP-cone"/>
    <property type="match status" value="1"/>
</dbReference>
<dbReference type="Pfam" id="PF22811">
    <property type="entry name" value="Zn_ribbon_NrdR"/>
    <property type="match status" value="1"/>
</dbReference>
<dbReference type="PROSITE" id="PS51161">
    <property type="entry name" value="ATP_CONE"/>
    <property type="match status" value="1"/>
</dbReference>